<protein>
    <recommendedName>
        <fullName>Repression factor of MSEs protein 1</fullName>
    </recommendedName>
</protein>
<proteinExistence type="evidence at protein level"/>
<reference key="1">
    <citation type="journal article" date="1996" name="Yeast">
        <title>DNA sequence analysis of the VPH1-SNF2 region on chromosome XV of Saccharomyces cerevisiae.</title>
        <authorList>
            <person name="Cheret G."/>
            <person name="Bernardi A."/>
            <person name="Sor F.J."/>
        </authorList>
    </citation>
    <scope>NUCLEOTIDE SEQUENCE [GENOMIC DNA]</scope>
    <source>
        <strain>ATCC 204508 / S288c</strain>
    </source>
</reference>
<reference key="2">
    <citation type="journal article" date="1997" name="Nature">
        <title>The nucleotide sequence of Saccharomyces cerevisiae chromosome XV.</title>
        <authorList>
            <person name="Dujon B."/>
            <person name="Albermann K."/>
            <person name="Aldea M."/>
            <person name="Alexandraki D."/>
            <person name="Ansorge W."/>
            <person name="Arino J."/>
            <person name="Benes V."/>
            <person name="Bohn C."/>
            <person name="Bolotin-Fukuhara M."/>
            <person name="Bordonne R."/>
            <person name="Boyer J."/>
            <person name="Camasses A."/>
            <person name="Casamayor A."/>
            <person name="Casas C."/>
            <person name="Cheret G."/>
            <person name="Cziepluch C."/>
            <person name="Daignan-Fornier B."/>
            <person name="Dang V.-D."/>
            <person name="de Haan M."/>
            <person name="Delius H."/>
            <person name="Durand P."/>
            <person name="Fairhead C."/>
            <person name="Feldmann H."/>
            <person name="Gaillon L."/>
            <person name="Galisson F."/>
            <person name="Gamo F.-J."/>
            <person name="Gancedo C."/>
            <person name="Goffeau A."/>
            <person name="Goulding S.E."/>
            <person name="Grivell L.A."/>
            <person name="Habbig B."/>
            <person name="Hand N.J."/>
            <person name="Hani J."/>
            <person name="Hattenhorst U."/>
            <person name="Hebling U."/>
            <person name="Hernando Y."/>
            <person name="Herrero E."/>
            <person name="Heumann K."/>
            <person name="Hiesel R."/>
            <person name="Hilger F."/>
            <person name="Hofmann B."/>
            <person name="Hollenberg C.P."/>
            <person name="Hughes B."/>
            <person name="Jauniaux J.-C."/>
            <person name="Kalogeropoulos A."/>
            <person name="Katsoulou C."/>
            <person name="Kordes E."/>
            <person name="Lafuente M.J."/>
            <person name="Landt O."/>
            <person name="Louis E.J."/>
            <person name="Maarse A.C."/>
            <person name="Madania A."/>
            <person name="Mannhaupt G."/>
            <person name="Marck C."/>
            <person name="Martin R.P."/>
            <person name="Mewes H.-W."/>
            <person name="Michaux G."/>
            <person name="Paces V."/>
            <person name="Parle-McDermott A.G."/>
            <person name="Pearson B.M."/>
            <person name="Perrin A."/>
            <person name="Pettersson B."/>
            <person name="Poch O."/>
            <person name="Pohl T.M."/>
            <person name="Poirey R."/>
            <person name="Portetelle D."/>
            <person name="Pujol A."/>
            <person name="Purnelle B."/>
            <person name="Ramezani Rad M."/>
            <person name="Rechmann S."/>
            <person name="Schwager C."/>
            <person name="Schweizer M."/>
            <person name="Sor F."/>
            <person name="Sterky F."/>
            <person name="Tarassov I.A."/>
            <person name="Teodoru C."/>
            <person name="Tettelin H."/>
            <person name="Thierry A."/>
            <person name="Tobiasch E."/>
            <person name="Tzermia M."/>
            <person name="Uhlen M."/>
            <person name="Unseld M."/>
            <person name="Valens M."/>
            <person name="Vandenbol M."/>
            <person name="Vetter I."/>
            <person name="Vlcek C."/>
            <person name="Voet M."/>
            <person name="Volckaert G."/>
            <person name="Voss H."/>
            <person name="Wambutt R."/>
            <person name="Wedler H."/>
            <person name="Wiemann S."/>
            <person name="Winsor B."/>
            <person name="Wolfe K.H."/>
            <person name="Zollner A."/>
            <person name="Zumstein E."/>
            <person name="Kleine K."/>
        </authorList>
    </citation>
    <scope>NUCLEOTIDE SEQUENCE [LARGE SCALE GENOMIC DNA]</scope>
    <source>
        <strain>ATCC 204508 / S288c</strain>
    </source>
</reference>
<reference key="3">
    <citation type="journal article" date="2014" name="G3 (Bethesda)">
        <title>The reference genome sequence of Saccharomyces cerevisiae: Then and now.</title>
        <authorList>
            <person name="Engel S.R."/>
            <person name="Dietrich F.S."/>
            <person name="Fisk D.G."/>
            <person name="Binkley G."/>
            <person name="Balakrishnan R."/>
            <person name="Costanzo M.C."/>
            <person name="Dwight S.S."/>
            <person name="Hitz B.C."/>
            <person name="Karra K."/>
            <person name="Nash R.S."/>
            <person name="Weng S."/>
            <person name="Wong E.D."/>
            <person name="Lloyd P."/>
            <person name="Skrzypek M.S."/>
            <person name="Miyasato S.R."/>
            <person name="Simison M."/>
            <person name="Cherry J.M."/>
        </authorList>
    </citation>
    <scope>GENOME REANNOTATION</scope>
    <source>
        <strain>ATCC 204508 / S288c</strain>
    </source>
</reference>
<reference key="4">
    <citation type="journal article" date="2003" name="Mol. Cell. Biol.">
        <title>Rfm1, a novel tethering factor required to recruit the hst1 histone deacetylase for repression of middle sporulation genes.</title>
        <authorList>
            <person name="McCord R."/>
            <person name="Pierce M."/>
            <person name="Xie J."/>
            <person name="Wonkatal S."/>
            <person name="Mickel C."/>
            <person name="Vershon A.K."/>
        </authorList>
    </citation>
    <scope>FUNCTION</scope>
    <scope>INTERACTION WITH SUM1 AND HST1</scope>
</reference>
<reference key="5">
    <citation type="journal article" date="2003" name="Nature">
        <title>Global analysis of protein expression in yeast.</title>
        <authorList>
            <person name="Ghaemmaghami S."/>
            <person name="Huh W.-K."/>
            <person name="Bower K."/>
            <person name="Howson R.W."/>
            <person name="Belle A."/>
            <person name="Dephoure N."/>
            <person name="O'Shea E.K."/>
            <person name="Weissman J.S."/>
        </authorList>
    </citation>
    <scope>LEVEL OF PROTEIN EXPRESSION [LARGE SCALE ANALYSIS]</scope>
</reference>
<reference key="6">
    <citation type="journal article" date="2008" name="Mol. Cell. Proteomics">
        <title>A multidimensional chromatography technology for in-depth phosphoproteome analysis.</title>
        <authorList>
            <person name="Albuquerque C.P."/>
            <person name="Smolka M.B."/>
            <person name="Payne S.H."/>
            <person name="Bafna V."/>
            <person name="Eng J."/>
            <person name="Zhou H."/>
        </authorList>
    </citation>
    <scope>PHOSPHORYLATION [LARGE SCALE ANALYSIS] AT SER-215</scope>
    <scope>IDENTIFICATION BY MASS SPECTROMETRY [LARGE SCALE ANALYSIS]</scope>
</reference>
<reference key="7">
    <citation type="journal article" date="2009" name="Science">
        <title>Global analysis of Cdk1 substrate phosphorylation sites provides insights into evolution.</title>
        <authorList>
            <person name="Holt L.J."/>
            <person name="Tuch B.B."/>
            <person name="Villen J."/>
            <person name="Johnson A.D."/>
            <person name="Gygi S.P."/>
            <person name="Morgan D.O."/>
        </authorList>
    </citation>
    <scope>IDENTIFICATION BY MASS SPECTROMETRY [LARGE SCALE ANALYSIS]</scope>
</reference>
<organism>
    <name type="scientific">Saccharomyces cerevisiae (strain ATCC 204508 / S288c)</name>
    <name type="common">Baker's yeast</name>
    <dbReference type="NCBI Taxonomy" id="559292"/>
    <lineage>
        <taxon>Eukaryota</taxon>
        <taxon>Fungi</taxon>
        <taxon>Dikarya</taxon>
        <taxon>Ascomycota</taxon>
        <taxon>Saccharomycotina</taxon>
        <taxon>Saccharomycetes</taxon>
        <taxon>Saccharomycetales</taxon>
        <taxon>Saccharomycetaceae</taxon>
        <taxon>Saccharomyces</taxon>
    </lineage>
</organism>
<sequence>MSTNTEIIKNSDLQSLINDKRRLINEIKDFNKSIKPLEFESYQDYFLIKTFKKGISASGHVDIDSLRNKEYGIYYKKIKRNSTQEVGEPIPRNTSSSSSSTRSNSSADISDTEYSGENTPTTTGAASRRRRTRSRAIQRENSLPASLPSISEANANNDDVTISEINGSELPFPIPISEVENIDIASDITERDGIRRRSSRISERDKRRSQSRLGSEEDEEGDGHDGDEGETKIQDLYESLVPKILESRRRSDWILPPKARYTPEKQMRTKPSFKSIKINELVGNKRIRSILSRFEGGVAGIRKRDWDSTQ</sequence>
<comment type="function">
    <text evidence="2">Tethering factor required for histone deacetylase HST1-mediated repression. Probably involved in targeting HST1 to a subset of SUM1-regulated genes.</text>
</comment>
<comment type="subunit">
    <text evidence="2">Interacts directly with HST1 and SUM1. Required for the interaction between HST1 and SUM1.</text>
</comment>
<comment type="interaction">
    <interactant intactId="EBI-15023">
        <id>Q12192</id>
    </interactant>
    <interactant intactId="EBI-8691">
        <id>P53685</id>
        <label>HST1</label>
    </interactant>
    <organismsDiffer>false</organismsDiffer>
    <experiments>2</experiments>
</comment>
<comment type="interaction">
    <interactant intactId="EBI-15023">
        <id>Q12192</id>
    </interactant>
    <interactant intactId="EBI-18547">
        <id>P46676</id>
        <label>SUM1</label>
    </interactant>
    <organismsDiffer>false</organismsDiffer>
    <experiments>2</experiments>
</comment>
<comment type="subcellular location">
    <subcellularLocation>
        <location>Nucleus</location>
    </subcellularLocation>
</comment>
<comment type="miscellaneous">
    <text evidence="3">Present with 861 molecules/cell in log phase SD medium.</text>
</comment>
<keyword id="KW-0539">Nucleus</keyword>
<keyword id="KW-0597">Phosphoprotein</keyword>
<keyword id="KW-1185">Reference proteome</keyword>
<gene>
    <name type="primary">RFM1</name>
    <name type="ordered locus">YOR279C</name>
</gene>
<name>RFM1_YEAST</name>
<dbReference type="EMBL" id="X89633">
    <property type="protein sequence ID" value="CAA61784.1"/>
    <property type="molecule type" value="Genomic_DNA"/>
</dbReference>
<dbReference type="EMBL" id="Z75187">
    <property type="protein sequence ID" value="CAA99505.1"/>
    <property type="molecule type" value="Genomic_DNA"/>
</dbReference>
<dbReference type="EMBL" id="BK006948">
    <property type="protein sequence ID" value="DAA11044.1"/>
    <property type="molecule type" value="Genomic_DNA"/>
</dbReference>
<dbReference type="PIR" id="S67181">
    <property type="entry name" value="S67181"/>
</dbReference>
<dbReference type="RefSeq" id="NP_014922.3">
    <property type="nucleotide sequence ID" value="NM_001183698.3"/>
</dbReference>
<dbReference type="BioGRID" id="34667">
    <property type="interactions" value="107"/>
</dbReference>
<dbReference type="ComplexPortal" id="CPX-1384">
    <property type="entry name" value="SUM1-RFM1-HST1 histone deacetylase complex"/>
</dbReference>
<dbReference type="DIP" id="DIP-4430N"/>
<dbReference type="FunCoup" id="Q12192">
    <property type="interactions" value="155"/>
</dbReference>
<dbReference type="IntAct" id="Q12192">
    <property type="interactions" value="13"/>
</dbReference>
<dbReference type="MINT" id="Q12192"/>
<dbReference type="STRING" id="4932.YOR279C"/>
<dbReference type="CarbonylDB" id="Q12192"/>
<dbReference type="iPTMnet" id="Q12192"/>
<dbReference type="PaxDb" id="4932-YOR279C"/>
<dbReference type="PeptideAtlas" id="Q12192"/>
<dbReference type="EnsemblFungi" id="YOR279C_mRNA">
    <property type="protein sequence ID" value="YOR279C"/>
    <property type="gene ID" value="YOR279C"/>
</dbReference>
<dbReference type="GeneID" id="854453"/>
<dbReference type="KEGG" id="sce:YOR279C"/>
<dbReference type="AGR" id="SGD:S000005805"/>
<dbReference type="SGD" id="S000005805">
    <property type="gene designation" value="RFM1"/>
</dbReference>
<dbReference type="VEuPathDB" id="FungiDB:YOR279C"/>
<dbReference type="eggNOG" id="ENOG502S1B3">
    <property type="taxonomic scope" value="Eukaryota"/>
</dbReference>
<dbReference type="HOGENOM" id="CLU_055872_1_0_1"/>
<dbReference type="InParanoid" id="Q12192"/>
<dbReference type="OMA" id="PEKQMRT"/>
<dbReference type="OrthoDB" id="4036116at2759"/>
<dbReference type="BioCyc" id="YEAST:G3O-33766-MONOMER"/>
<dbReference type="BioGRID-ORCS" id="854453">
    <property type="hits" value="5 hits in 10 CRISPR screens"/>
</dbReference>
<dbReference type="PRO" id="PR:Q12192"/>
<dbReference type="Proteomes" id="UP000002311">
    <property type="component" value="Chromosome XV"/>
</dbReference>
<dbReference type="RNAct" id="Q12192">
    <property type="molecule type" value="protein"/>
</dbReference>
<dbReference type="GO" id="GO:0000118">
    <property type="term" value="C:histone deacetylase complex"/>
    <property type="evidence" value="ECO:0000353"/>
    <property type="project" value="ComplexPortal"/>
</dbReference>
<dbReference type="GO" id="GO:0030674">
    <property type="term" value="F:protein-macromolecule adaptor activity"/>
    <property type="evidence" value="ECO:0000353"/>
    <property type="project" value="SGD"/>
</dbReference>
<dbReference type="GO" id="GO:0000278">
    <property type="term" value="P:mitotic cell cycle"/>
    <property type="evidence" value="ECO:0000315"/>
    <property type="project" value="SGD"/>
</dbReference>
<dbReference type="GO" id="GO:0000122">
    <property type="term" value="P:negative regulation of transcription by RNA polymerase II"/>
    <property type="evidence" value="ECO:0000315"/>
    <property type="project" value="SGD"/>
</dbReference>
<dbReference type="GO" id="GO:0032298">
    <property type="term" value="P:positive regulation of DNA-templated DNA replication initiation"/>
    <property type="evidence" value="ECO:0000316"/>
    <property type="project" value="SGD"/>
</dbReference>
<dbReference type="GO" id="GO:0030174">
    <property type="term" value="P:regulation of DNA-templated DNA replication initiation"/>
    <property type="evidence" value="ECO:0000303"/>
    <property type="project" value="ComplexPortal"/>
</dbReference>
<dbReference type="GO" id="GO:0043937">
    <property type="term" value="P:regulation of sporulation"/>
    <property type="evidence" value="ECO:0000303"/>
    <property type="project" value="ComplexPortal"/>
</dbReference>
<dbReference type="GO" id="GO:0006357">
    <property type="term" value="P:regulation of transcription by RNA polymerase II"/>
    <property type="evidence" value="ECO:0000303"/>
    <property type="project" value="ComplexPortal"/>
</dbReference>
<evidence type="ECO:0000256" key="1">
    <source>
        <dbReference type="SAM" id="MobiDB-lite"/>
    </source>
</evidence>
<evidence type="ECO:0000269" key="2">
    <source>
    </source>
</evidence>
<evidence type="ECO:0000269" key="3">
    <source>
    </source>
</evidence>
<evidence type="ECO:0007744" key="4">
    <source>
    </source>
</evidence>
<accession>Q12192</accession>
<accession>D6W2X8</accession>
<feature type="chain" id="PRO_0000097309" description="Repression factor of MSEs protein 1">
    <location>
        <begin position="1"/>
        <end position="310"/>
    </location>
</feature>
<feature type="region of interest" description="Disordered" evidence="1">
    <location>
        <begin position="83"/>
        <end position="155"/>
    </location>
</feature>
<feature type="region of interest" description="Disordered" evidence="1">
    <location>
        <begin position="192"/>
        <end position="230"/>
    </location>
</feature>
<feature type="compositionally biased region" description="Low complexity" evidence="1">
    <location>
        <begin position="92"/>
        <end position="106"/>
    </location>
</feature>
<feature type="compositionally biased region" description="Polar residues" evidence="1">
    <location>
        <begin position="107"/>
        <end position="120"/>
    </location>
</feature>
<feature type="compositionally biased region" description="Basic residues" evidence="1">
    <location>
        <begin position="127"/>
        <end position="136"/>
    </location>
</feature>
<feature type="compositionally biased region" description="Polar residues" evidence="1">
    <location>
        <begin position="139"/>
        <end position="155"/>
    </location>
</feature>
<feature type="compositionally biased region" description="Basic and acidic residues" evidence="1">
    <location>
        <begin position="192"/>
        <end position="208"/>
    </location>
</feature>
<feature type="modified residue" description="Phosphoserine" evidence="4">
    <location>
        <position position="215"/>
    </location>
</feature>